<organism>
    <name type="scientific">Bos taurus</name>
    <name type="common">Bovine</name>
    <dbReference type="NCBI Taxonomy" id="9913"/>
    <lineage>
        <taxon>Eukaryota</taxon>
        <taxon>Metazoa</taxon>
        <taxon>Chordata</taxon>
        <taxon>Craniata</taxon>
        <taxon>Vertebrata</taxon>
        <taxon>Euteleostomi</taxon>
        <taxon>Mammalia</taxon>
        <taxon>Eutheria</taxon>
        <taxon>Laurasiatheria</taxon>
        <taxon>Artiodactyla</taxon>
        <taxon>Ruminantia</taxon>
        <taxon>Pecora</taxon>
        <taxon>Bovidae</taxon>
        <taxon>Bovinae</taxon>
        <taxon>Bos</taxon>
    </lineage>
</organism>
<accession>A1L520</accession>
<name>ARFG2_BOVIN</name>
<evidence type="ECO:0000250" key="1"/>
<evidence type="ECO:0000250" key="2">
    <source>
        <dbReference type="UniProtKB" id="Q8N6H7"/>
    </source>
</evidence>
<evidence type="ECO:0000255" key="3"/>
<evidence type="ECO:0000255" key="4">
    <source>
        <dbReference type="PROSITE-ProRule" id="PRU00288"/>
    </source>
</evidence>
<evidence type="ECO:0000256" key="5">
    <source>
        <dbReference type="SAM" id="MobiDB-lite"/>
    </source>
</evidence>
<evidence type="ECO:0000312" key="6">
    <source>
        <dbReference type="EMBL" id="ABM06074.1"/>
    </source>
</evidence>
<keyword id="KW-0007">Acetylation</keyword>
<keyword id="KW-0175">Coiled coil</keyword>
<keyword id="KW-0963">Cytoplasm</keyword>
<keyword id="KW-0931">ER-Golgi transport</keyword>
<keyword id="KW-0333">Golgi apparatus</keyword>
<keyword id="KW-0343">GTPase activation</keyword>
<keyword id="KW-0472">Membrane</keyword>
<keyword id="KW-0479">Metal-binding</keyword>
<keyword id="KW-0597">Phosphoprotein</keyword>
<keyword id="KW-0653">Protein transport</keyword>
<keyword id="KW-1185">Reference proteome</keyword>
<keyword id="KW-0813">Transport</keyword>
<keyword id="KW-0862">Zinc</keyword>
<keyword id="KW-0863">Zinc-finger</keyword>
<gene>
    <name type="primary">ARFGAP2</name>
    <name type="synonym">ZNF289</name>
</gene>
<dbReference type="EMBL" id="BT029807">
    <property type="protein sequence ID" value="ABM06074.1"/>
    <property type="molecule type" value="mRNA"/>
</dbReference>
<dbReference type="RefSeq" id="NP_001073696.1">
    <property type="nucleotide sequence ID" value="NM_001080227.1"/>
</dbReference>
<dbReference type="SMR" id="A1L520"/>
<dbReference type="FunCoup" id="A1L520">
    <property type="interactions" value="3924"/>
</dbReference>
<dbReference type="STRING" id="9913.ENSBTAP00000059808"/>
<dbReference type="PaxDb" id="9913-ENSBTAP00000012592"/>
<dbReference type="PeptideAtlas" id="A1L520"/>
<dbReference type="GeneID" id="505438"/>
<dbReference type="KEGG" id="bta:505438"/>
<dbReference type="CTD" id="84364"/>
<dbReference type="eggNOG" id="KOG0706">
    <property type="taxonomic scope" value="Eukaryota"/>
</dbReference>
<dbReference type="InParanoid" id="A1L520"/>
<dbReference type="OrthoDB" id="983479at2759"/>
<dbReference type="Proteomes" id="UP000009136">
    <property type="component" value="Unplaced"/>
</dbReference>
<dbReference type="GO" id="GO:0000139">
    <property type="term" value="C:Golgi membrane"/>
    <property type="evidence" value="ECO:0007669"/>
    <property type="project" value="UniProtKB-SubCell"/>
</dbReference>
<dbReference type="GO" id="GO:0005096">
    <property type="term" value="F:GTPase activator activity"/>
    <property type="evidence" value="ECO:0000318"/>
    <property type="project" value="GO_Central"/>
</dbReference>
<dbReference type="GO" id="GO:0008270">
    <property type="term" value="F:zinc ion binding"/>
    <property type="evidence" value="ECO:0007669"/>
    <property type="project" value="UniProtKB-KW"/>
</dbReference>
<dbReference type="GO" id="GO:0048205">
    <property type="term" value="P:COPI coating of Golgi vesicle"/>
    <property type="evidence" value="ECO:0000318"/>
    <property type="project" value="GO_Central"/>
</dbReference>
<dbReference type="GO" id="GO:0015031">
    <property type="term" value="P:protein transport"/>
    <property type="evidence" value="ECO:0007669"/>
    <property type="project" value="UniProtKB-KW"/>
</dbReference>
<dbReference type="CDD" id="cd09029">
    <property type="entry name" value="ArfGap_ArfGap2"/>
    <property type="match status" value="1"/>
</dbReference>
<dbReference type="FunFam" id="1.10.220.150:FF:000004">
    <property type="entry name" value="Putative ADP-ribosylation factor GTPase-activating protein 2"/>
    <property type="match status" value="1"/>
</dbReference>
<dbReference type="Gene3D" id="1.10.220.150">
    <property type="entry name" value="Arf GTPase activating protein"/>
    <property type="match status" value="1"/>
</dbReference>
<dbReference type="InterPro" id="IPR037278">
    <property type="entry name" value="ARFGAP/RecO"/>
</dbReference>
<dbReference type="InterPro" id="IPR001164">
    <property type="entry name" value="ArfGAP_dom"/>
</dbReference>
<dbReference type="InterPro" id="IPR038508">
    <property type="entry name" value="ArfGAP_dom_sf"/>
</dbReference>
<dbReference type="PANTHER" id="PTHR45686">
    <property type="entry name" value="ADP-RIBOSYLATION FACTOR GTPASE ACTIVATING PROTEIN 3, ISOFORM H-RELATED"/>
    <property type="match status" value="1"/>
</dbReference>
<dbReference type="PANTHER" id="PTHR45686:SF10">
    <property type="entry name" value="ADP-RIBOSYLATION FACTOR GTPASE-ACTIVATING PROTEIN 2"/>
    <property type="match status" value="1"/>
</dbReference>
<dbReference type="Pfam" id="PF01412">
    <property type="entry name" value="ArfGap"/>
    <property type="match status" value="1"/>
</dbReference>
<dbReference type="PRINTS" id="PR00405">
    <property type="entry name" value="REVINTRACTNG"/>
</dbReference>
<dbReference type="SMART" id="SM00105">
    <property type="entry name" value="ArfGap"/>
    <property type="match status" value="1"/>
</dbReference>
<dbReference type="SUPFAM" id="SSF57863">
    <property type="entry name" value="ArfGap/RecO-like zinc finger"/>
    <property type="match status" value="1"/>
</dbReference>
<dbReference type="PROSITE" id="PS50115">
    <property type="entry name" value="ARFGAP"/>
    <property type="match status" value="1"/>
</dbReference>
<sequence>MAAEPNKTEIQTFFKRLRAIPTNKACFDCGAKNPSWASITYGVFLCIDCSGVHRSLGVHLSFIRSTELDSTWSWFQLRCMQVGGNANATAFFRQHGCTANDANTKYNSRAAQMYREKIRQLGSAALARHGTDLWTDSVSTAPSHSPEKKESDFFLEHTQPPAWNAPVTDLSETQQPAPSAESSGLAQPEHGPNMDLLGTSPKASLEPKTSLIGKKKPAAAKKGLGAKKGLGAQKVSSQSFSEIERQAQVAEKLREQQVADAKKQAEESMVASMRLAYQELQIDRKKEEKKLQNLEGKKREQAERLGMGLVSRSSVSHSVLSEMQVIEQETPVSAKSSRSQLDLFDDVGTFASGPPKYKDNPFSLGESFGSRWDTDTAWGMDRMEEKEPEVTVSSIRPVSERVTNRREVESRSSGLESSEARQKFAGAKAISSDMFFGREVDTEYEARSRLQQLSGSSAISSSDLFGDVDGAHGAGSVSLGNVLPTADIAQFKQGVKSVAGKMAVLANGVMNSLQDRYGSY</sequence>
<proteinExistence type="evidence at transcript level"/>
<feature type="initiator methionine" description="Removed" evidence="2">
    <location>
        <position position="1"/>
    </location>
</feature>
<feature type="chain" id="PRO_0000314051" description="ADP-ribosylation factor GTPase-activating protein 2">
    <location>
        <begin position="2"/>
        <end position="520"/>
    </location>
</feature>
<feature type="domain" description="Arf-GAP" evidence="4">
    <location>
        <begin position="11"/>
        <end position="127"/>
    </location>
</feature>
<feature type="zinc finger region" description="C4-type" evidence="4">
    <location>
        <begin position="26"/>
        <end position="49"/>
    </location>
</feature>
<feature type="region of interest" description="Required for interaction with coatomer" evidence="2">
    <location>
        <begin position="97"/>
        <end position="520"/>
    </location>
</feature>
<feature type="region of interest" description="Disordered" evidence="5">
    <location>
        <begin position="159"/>
        <end position="240"/>
    </location>
</feature>
<feature type="coiled-coil region" evidence="3">
    <location>
        <begin position="242"/>
        <end position="307"/>
    </location>
</feature>
<feature type="compositionally biased region" description="Polar residues" evidence="5">
    <location>
        <begin position="170"/>
        <end position="185"/>
    </location>
</feature>
<feature type="compositionally biased region" description="Low complexity" evidence="5">
    <location>
        <begin position="220"/>
        <end position="232"/>
    </location>
</feature>
<feature type="modified residue" description="N-acetylalanine" evidence="2">
    <location>
        <position position="2"/>
    </location>
</feature>
<feature type="modified residue" description="Phosphoserine" evidence="2">
    <location>
        <position position="145"/>
    </location>
</feature>
<feature type="modified residue" description="Phosphoserine" evidence="2">
    <location>
        <position position="200"/>
    </location>
</feature>
<feature type="modified residue" description="Phosphoserine" evidence="2">
    <location>
        <position position="236"/>
    </location>
</feature>
<feature type="modified residue" description="Phosphoserine" evidence="2">
    <location>
        <position position="239"/>
    </location>
</feature>
<feature type="modified residue" description="Phosphoserine" evidence="2">
    <location>
        <position position="311"/>
    </location>
</feature>
<feature type="modified residue" description="Phosphoserine" evidence="2">
    <location>
        <position position="333"/>
    </location>
</feature>
<feature type="modified residue" description="Phosphoserine" evidence="2">
    <location>
        <position position="339"/>
    </location>
</feature>
<feature type="modified residue" description="Phosphoserine" evidence="2">
    <location>
        <position position="363"/>
    </location>
</feature>
<feature type="modified residue" description="Phosphoserine" evidence="2">
    <location>
        <position position="367"/>
    </location>
</feature>
<feature type="modified residue" description="Phosphoserine" evidence="2">
    <location>
        <position position="431"/>
    </location>
</feature>
<feature type="modified residue" description="Phosphoserine" evidence="2">
    <location>
        <position position="432"/>
    </location>
</feature>
<feature type="modified residue" description="Phosphoserine" evidence="2">
    <location>
        <position position="512"/>
    </location>
</feature>
<comment type="function">
    <text evidence="2">GTPase-activating protein (GAP) for ADP ribosylation factor 1 (ARF1). Implicated in coatomer-mediated protein transport between the Golgi complex and the endoplasmic reticulum. Hydrolysis of ARF1-bound GTP may lead to dissociation of coatomer from Golgi-derived membranes to allow fusion with target membranes (By similarity).</text>
</comment>
<comment type="subunit">
    <text evidence="1">Interacts with the coatomer complex. Interacts with C-terminal appendage domain of COPG1 (By similarity).</text>
</comment>
<comment type="subcellular location">
    <subcellularLocation>
        <location evidence="2">Cytoplasm</location>
    </subcellularLocation>
    <subcellularLocation>
        <location evidence="2">Golgi apparatus membrane</location>
        <topology evidence="2">Peripheral membrane protein</topology>
        <orientation evidence="2">Cytoplasmic side</orientation>
    </subcellularLocation>
    <text evidence="2">Also found on peripheral punctate structures likely to be endoplasmic reticulum-Golgi intermediate compartment.</text>
</comment>
<reference evidence="6" key="1">
    <citation type="journal article" date="2005" name="BMC Genomics">
        <title>Characterization of 954 bovine full-CDS cDNA sequences.</title>
        <authorList>
            <person name="Harhay G.P."/>
            <person name="Sonstegard T.S."/>
            <person name="Keele J.W."/>
            <person name="Heaton M.P."/>
            <person name="Clawson M.L."/>
            <person name="Snelling W.M."/>
            <person name="Wiedmann R.T."/>
            <person name="Van Tassell C.P."/>
            <person name="Smith T.P.L."/>
        </authorList>
    </citation>
    <scope>NUCLEOTIDE SEQUENCE [LARGE SCALE MRNA]</scope>
</reference>
<protein>
    <recommendedName>
        <fullName>ADP-ribosylation factor GTPase-activating protein 2</fullName>
        <shortName>ARF GAP 2</shortName>
    </recommendedName>
    <alternativeName>
        <fullName>Zinc finger protein 289</fullName>
    </alternativeName>
</protein>